<feature type="chain" id="PRO_0000108076" description="Spermidine export protein MdtI">
    <location>
        <begin position="1"/>
        <end position="109"/>
    </location>
</feature>
<feature type="topological domain" description="Periplasmic" evidence="2">
    <location>
        <begin position="1"/>
        <end position="5"/>
    </location>
</feature>
<feature type="transmembrane region" description="Helical" evidence="2">
    <location>
        <begin position="6"/>
        <end position="26"/>
    </location>
</feature>
<feature type="topological domain" description="Cytoplasmic" evidence="2">
    <location>
        <begin position="27"/>
        <end position="35"/>
    </location>
</feature>
<feature type="transmembrane region" description="Helical" evidence="2">
    <location>
        <begin position="36"/>
        <end position="56"/>
    </location>
</feature>
<feature type="topological domain" description="Periplasmic" evidence="2">
    <location>
        <begin position="57"/>
        <end position="63"/>
    </location>
</feature>
<feature type="transmembrane region" description="Helical" evidence="2">
    <location>
        <begin position="64"/>
        <end position="84"/>
    </location>
</feature>
<feature type="topological domain" description="Cytoplasmic" evidence="2">
    <location>
        <begin position="85"/>
        <end position="87"/>
    </location>
</feature>
<feature type="transmembrane region" description="Helical" evidence="2">
    <location>
        <begin position="88"/>
        <end position="108"/>
    </location>
</feature>
<feature type="topological domain" description="Periplasmic" evidence="2">
    <location>
        <position position="109"/>
    </location>
</feature>
<reference key="1">
    <citation type="journal article" date="2002" name="Proc. Natl. Acad. Sci. U.S.A.">
        <title>Extensive mosaic structure revealed by the complete genome sequence of uropathogenic Escherichia coli.</title>
        <authorList>
            <person name="Welch R.A."/>
            <person name="Burland V."/>
            <person name="Plunkett G. III"/>
            <person name="Redford P."/>
            <person name="Roesch P."/>
            <person name="Rasko D."/>
            <person name="Buckles E.L."/>
            <person name="Liou S.-R."/>
            <person name="Boutin A."/>
            <person name="Hackett J."/>
            <person name="Stroud D."/>
            <person name="Mayhew G.F."/>
            <person name="Rose D.J."/>
            <person name="Zhou S."/>
            <person name="Schwartz D.C."/>
            <person name="Perna N.T."/>
            <person name="Mobley H.L.T."/>
            <person name="Donnenberg M.S."/>
            <person name="Blattner F.R."/>
        </authorList>
    </citation>
    <scope>NUCLEOTIDE SEQUENCE [LARGE SCALE GENOMIC DNA]</scope>
    <source>
        <strain>CFT073 / ATCC 700928 / UPEC</strain>
    </source>
</reference>
<organism>
    <name type="scientific">Escherichia coli O6:H1 (strain CFT073 / ATCC 700928 / UPEC)</name>
    <dbReference type="NCBI Taxonomy" id="199310"/>
    <lineage>
        <taxon>Bacteria</taxon>
        <taxon>Pseudomonadati</taxon>
        <taxon>Pseudomonadota</taxon>
        <taxon>Gammaproteobacteria</taxon>
        <taxon>Enterobacterales</taxon>
        <taxon>Enterobacteriaceae</taxon>
        <taxon>Escherichia</taxon>
    </lineage>
</organism>
<protein>
    <recommendedName>
        <fullName>Spermidine export protein MdtI</fullName>
    </recommendedName>
</protein>
<comment type="function">
    <text evidence="1">Catalyzes the excretion of spermidine.</text>
</comment>
<comment type="subunit">
    <text evidence="1">Forms a complex with MdtJ.</text>
</comment>
<comment type="subcellular location">
    <subcellularLocation>
        <location evidence="1">Cell inner membrane</location>
        <topology evidence="1">Multi-pass membrane protein</topology>
    </subcellularLocation>
</comment>
<comment type="similarity">
    <text evidence="3">Belongs to the drug/metabolite transporter (DMT) superfamily. Small multidrug resistance (SMR) (TC 2.A.7.1) family. MdtI subfamily.</text>
</comment>
<accession>Q8FHB5</accession>
<gene>
    <name type="primary">mdtI</name>
    <name type="ordered locus">c1991</name>
</gene>
<name>MDTI_ECOL6</name>
<keyword id="KW-0997">Cell inner membrane</keyword>
<keyword id="KW-1003">Cell membrane</keyword>
<keyword id="KW-0472">Membrane</keyword>
<keyword id="KW-1185">Reference proteome</keyword>
<keyword id="KW-0812">Transmembrane</keyword>
<keyword id="KW-1133">Transmembrane helix</keyword>
<keyword id="KW-0813">Transport</keyword>
<sequence>MAQFEWVHAAWLALAIVLEIIANVFLKFSDGFRRKIFGLLSLAAVLAAFSALSQAVKGIDLSVAYALWGGFGIAATLAAGWILFGQRLNRKGWIGLVLLLAGMIMVKLA</sequence>
<evidence type="ECO:0000250" key="1"/>
<evidence type="ECO:0000255" key="2"/>
<evidence type="ECO:0000255" key="3">
    <source>
        <dbReference type="HAMAP-Rule" id="MF_01597"/>
    </source>
</evidence>
<dbReference type="EMBL" id="AE014075">
    <property type="protein sequence ID" value="AAN80451.1"/>
    <property type="molecule type" value="Genomic_DNA"/>
</dbReference>
<dbReference type="RefSeq" id="WP_000046657.1">
    <property type="nucleotide sequence ID" value="NZ_CP051263.1"/>
</dbReference>
<dbReference type="SMR" id="Q8FHB5"/>
<dbReference type="KEGG" id="ecc:c1991"/>
<dbReference type="eggNOG" id="COG2076">
    <property type="taxonomic scope" value="Bacteria"/>
</dbReference>
<dbReference type="HOGENOM" id="CLU_133067_0_4_6"/>
<dbReference type="BioCyc" id="ECOL199310:C1991-MONOMER"/>
<dbReference type="Proteomes" id="UP000001410">
    <property type="component" value="Chromosome"/>
</dbReference>
<dbReference type="GO" id="GO:0005886">
    <property type="term" value="C:plasma membrane"/>
    <property type="evidence" value="ECO:0007669"/>
    <property type="project" value="UniProtKB-SubCell"/>
</dbReference>
<dbReference type="GO" id="GO:0015199">
    <property type="term" value="F:amino-acid betaine transmembrane transporter activity"/>
    <property type="evidence" value="ECO:0007669"/>
    <property type="project" value="TreeGrafter"/>
</dbReference>
<dbReference type="GO" id="GO:0015297">
    <property type="term" value="F:antiporter activity"/>
    <property type="evidence" value="ECO:0007669"/>
    <property type="project" value="TreeGrafter"/>
</dbReference>
<dbReference type="GO" id="GO:0015220">
    <property type="term" value="F:choline transmembrane transporter activity"/>
    <property type="evidence" value="ECO:0007669"/>
    <property type="project" value="TreeGrafter"/>
</dbReference>
<dbReference type="GO" id="GO:0015606">
    <property type="term" value="F:spermidine transmembrane transporter activity"/>
    <property type="evidence" value="ECO:0007669"/>
    <property type="project" value="UniProtKB-UniRule"/>
</dbReference>
<dbReference type="GO" id="GO:0031460">
    <property type="term" value="P:glycine betaine transport"/>
    <property type="evidence" value="ECO:0007669"/>
    <property type="project" value="TreeGrafter"/>
</dbReference>
<dbReference type="FunFam" id="1.10.3730.20:FF:000001">
    <property type="entry name" value="Quaternary ammonium compound resistance transporter SugE"/>
    <property type="match status" value="1"/>
</dbReference>
<dbReference type="Gene3D" id="1.10.3730.20">
    <property type="match status" value="1"/>
</dbReference>
<dbReference type="HAMAP" id="MF_01597">
    <property type="entry name" value="MdtI"/>
    <property type="match status" value="1"/>
</dbReference>
<dbReference type="InterPro" id="IPR000390">
    <property type="entry name" value="Small_drug/metabolite_transptr"/>
</dbReference>
<dbReference type="InterPro" id="IPR045324">
    <property type="entry name" value="Small_multidrug_res"/>
</dbReference>
<dbReference type="InterPro" id="IPR023737">
    <property type="entry name" value="Spermidine_export_MdtI"/>
</dbReference>
<dbReference type="NCBIfam" id="NF007934">
    <property type="entry name" value="PRK10650.1"/>
    <property type="match status" value="1"/>
</dbReference>
<dbReference type="PANTHER" id="PTHR30561">
    <property type="entry name" value="SMR FAMILY PROTON-DEPENDENT DRUG EFFLUX TRANSPORTER SUGE"/>
    <property type="match status" value="1"/>
</dbReference>
<dbReference type="PANTHER" id="PTHR30561:SF6">
    <property type="entry name" value="SPERMIDINE EXPORT PROTEIN MDTI"/>
    <property type="match status" value="1"/>
</dbReference>
<dbReference type="Pfam" id="PF00893">
    <property type="entry name" value="Multi_Drug_Res"/>
    <property type="match status" value="1"/>
</dbReference>
<dbReference type="SUPFAM" id="SSF103481">
    <property type="entry name" value="Multidrug resistance efflux transporter EmrE"/>
    <property type="match status" value="1"/>
</dbReference>
<proteinExistence type="inferred from homology"/>